<reference key="1">
    <citation type="journal article" date="2003" name="Lancet">
        <title>Genome sequence of Vibrio parahaemolyticus: a pathogenic mechanism distinct from that of V. cholerae.</title>
        <authorList>
            <person name="Makino K."/>
            <person name="Oshima K."/>
            <person name="Kurokawa K."/>
            <person name="Yokoyama K."/>
            <person name="Uda T."/>
            <person name="Tagomori K."/>
            <person name="Iijima Y."/>
            <person name="Najima M."/>
            <person name="Nakano M."/>
            <person name="Yamashita A."/>
            <person name="Kubota Y."/>
            <person name="Kimura S."/>
            <person name="Yasunaga T."/>
            <person name="Honda T."/>
            <person name="Shinagawa H."/>
            <person name="Hattori M."/>
            <person name="Iida T."/>
        </authorList>
    </citation>
    <scope>NUCLEOTIDE SEQUENCE [LARGE SCALE GENOMIC DNA]</scope>
    <source>
        <strain>RIMD 2210633</strain>
    </source>
</reference>
<sequence>MIEADRLIAPENPAFRDEDVIDRAIRPKKLADYQGQDHVRDQMEIFIKAAQLRSEALDHLLIFGPPGLGKTTLANIVANEMEVNIRTTSGPVLEKAGDLAALLTNLEENDVLFIDEIHRLSPMVEEVLYPAMEDYQLDIMIGEGPAARSIKIDLPPFTLIGATTRAGSLTSPLRDRFGITQRLEYYKVQDLQNIVQRSADCLGLSMEPEGALEVARRARGTPRIANRLLRRVRDYAEVKGNGHICADVADKALNMLDVDAQGFDYMDRKLLLAIMEKFGGGPVGLDNMAAAIGEEKDTIEDVLEPYLIQQGYLQRTPRGRIATDRAYLHFGIEK</sequence>
<name>RUVB_VIBPA</name>
<comment type="function">
    <text evidence="1">The RuvA-RuvB-RuvC complex processes Holliday junction (HJ) DNA during genetic recombination and DNA repair, while the RuvA-RuvB complex plays an important role in the rescue of blocked DNA replication forks via replication fork reversal (RFR). RuvA specifically binds to HJ cruciform DNA, conferring on it an open structure. The RuvB hexamer acts as an ATP-dependent pump, pulling dsDNA into and through the RuvAB complex. RuvB forms 2 homohexamers on either side of HJ DNA bound by 1 or 2 RuvA tetramers; 4 subunits per hexamer contact DNA at a time. Coordinated motions by a converter formed by DNA-disengaged RuvB subunits stimulates ATP hydrolysis and nucleotide exchange. Immobilization of the converter enables RuvB to convert the ATP-contained energy into a lever motion, pulling 2 nucleotides of DNA out of the RuvA tetramer per ATP hydrolyzed, thus driving DNA branch migration. The RuvB motors rotate together with the DNA substrate, which together with the progressing nucleotide cycle form the mechanistic basis for DNA recombination by continuous HJ branch migration. Branch migration allows RuvC to scan DNA until it finds its consensus sequence, where it cleaves and resolves cruciform DNA.</text>
</comment>
<comment type="catalytic activity">
    <reaction evidence="1">
        <text>ATP + H2O = ADP + phosphate + H(+)</text>
        <dbReference type="Rhea" id="RHEA:13065"/>
        <dbReference type="ChEBI" id="CHEBI:15377"/>
        <dbReference type="ChEBI" id="CHEBI:15378"/>
        <dbReference type="ChEBI" id="CHEBI:30616"/>
        <dbReference type="ChEBI" id="CHEBI:43474"/>
        <dbReference type="ChEBI" id="CHEBI:456216"/>
    </reaction>
</comment>
<comment type="subunit">
    <text evidence="1">Homohexamer. Forms an RuvA(8)-RuvB(12)-Holliday junction (HJ) complex. HJ DNA is sandwiched between 2 RuvA tetramers; dsDNA enters through RuvA and exits via RuvB. An RuvB hexamer assembles on each DNA strand where it exits the tetramer. Each RuvB hexamer is contacted by two RuvA subunits (via domain III) on 2 adjacent RuvB subunits; this complex drives branch migration. In the full resolvosome a probable DNA-RuvA(4)-RuvB(12)-RuvC(2) complex forms which resolves the HJ.</text>
</comment>
<comment type="subcellular location">
    <subcellularLocation>
        <location evidence="1">Cytoplasm</location>
    </subcellularLocation>
</comment>
<comment type="domain">
    <text evidence="1">Has 3 domains, the large (RuvB-L) and small ATPase (RuvB-S) domains and the C-terminal head (RuvB-H) domain. The head domain binds DNA, while the ATPase domains jointly bind ATP, ADP or are empty depending on the state of the subunit in the translocation cycle. During a single DNA translocation step the structure of each domain remains the same, but their relative positions change.</text>
</comment>
<comment type="similarity">
    <text evidence="1">Belongs to the RuvB family.</text>
</comment>
<gene>
    <name evidence="1" type="primary">ruvB</name>
    <name type="ordered locus">VP1052</name>
</gene>
<keyword id="KW-0067">ATP-binding</keyword>
<keyword id="KW-0963">Cytoplasm</keyword>
<keyword id="KW-0227">DNA damage</keyword>
<keyword id="KW-0233">DNA recombination</keyword>
<keyword id="KW-0234">DNA repair</keyword>
<keyword id="KW-0238">DNA-binding</keyword>
<keyword id="KW-0378">Hydrolase</keyword>
<keyword id="KW-0547">Nucleotide-binding</keyword>
<accession>Q87QU7</accession>
<proteinExistence type="inferred from homology"/>
<feature type="chain" id="PRO_0000165629" description="Holliday junction branch migration complex subunit RuvB">
    <location>
        <begin position="1"/>
        <end position="334"/>
    </location>
</feature>
<feature type="region of interest" description="Large ATPase domain (RuvB-L)" evidence="1">
    <location>
        <begin position="4"/>
        <end position="186"/>
    </location>
</feature>
<feature type="region of interest" description="Small ATPAse domain (RuvB-S)" evidence="1">
    <location>
        <begin position="187"/>
        <end position="257"/>
    </location>
</feature>
<feature type="region of interest" description="Head domain (RuvB-H)" evidence="1">
    <location>
        <begin position="260"/>
        <end position="334"/>
    </location>
</feature>
<feature type="binding site" evidence="1">
    <location>
        <position position="25"/>
    </location>
    <ligand>
        <name>ATP</name>
        <dbReference type="ChEBI" id="CHEBI:30616"/>
    </ligand>
</feature>
<feature type="binding site" evidence="1">
    <location>
        <position position="26"/>
    </location>
    <ligand>
        <name>ATP</name>
        <dbReference type="ChEBI" id="CHEBI:30616"/>
    </ligand>
</feature>
<feature type="binding site" evidence="1">
    <location>
        <position position="67"/>
    </location>
    <ligand>
        <name>ATP</name>
        <dbReference type="ChEBI" id="CHEBI:30616"/>
    </ligand>
</feature>
<feature type="binding site" evidence="1">
    <location>
        <position position="70"/>
    </location>
    <ligand>
        <name>ATP</name>
        <dbReference type="ChEBI" id="CHEBI:30616"/>
    </ligand>
</feature>
<feature type="binding site" evidence="1">
    <location>
        <position position="71"/>
    </location>
    <ligand>
        <name>ATP</name>
        <dbReference type="ChEBI" id="CHEBI:30616"/>
    </ligand>
</feature>
<feature type="binding site" evidence="1">
    <location>
        <position position="71"/>
    </location>
    <ligand>
        <name>Mg(2+)</name>
        <dbReference type="ChEBI" id="CHEBI:18420"/>
    </ligand>
</feature>
<feature type="binding site" evidence="1">
    <location>
        <position position="72"/>
    </location>
    <ligand>
        <name>ATP</name>
        <dbReference type="ChEBI" id="CHEBI:30616"/>
    </ligand>
</feature>
<feature type="binding site" evidence="1">
    <location>
        <begin position="133"/>
        <end position="135"/>
    </location>
    <ligand>
        <name>ATP</name>
        <dbReference type="ChEBI" id="CHEBI:30616"/>
    </ligand>
</feature>
<feature type="binding site" evidence="1">
    <location>
        <position position="176"/>
    </location>
    <ligand>
        <name>ATP</name>
        <dbReference type="ChEBI" id="CHEBI:30616"/>
    </ligand>
</feature>
<feature type="binding site" evidence="1">
    <location>
        <position position="186"/>
    </location>
    <ligand>
        <name>ATP</name>
        <dbReference type="ChEBI" id="CHEBI:30616"/>
    </ligand>
</feature>
<feature type="binding site" evidence="1">
    <location>
        <position position="223"/>
    </location>
    <ligand>
        <name>ATP</name>
        <dbReference type="ChEBI" id="CHEBI:30616"/>
    </ligand>
</feature>
<feature type="binding site" evidence="1">
    <location>
        <position position="315"/>
    </location>
    <ligand>
        <name>DNA</name>
        <dbReference type="ChEBI" id="CHEBI:16991"/>
    </ligand>
</feature>
<feature type="binding site" evidence="1">
    <location>
        <position position="320"/>
    </location>
    <ligand>
        <name>DNA</name>
        <dbReference type="ChEBI" id="CHEBI:16991"/>
    </ligand>
</feature>
<dbReference type="EC" id="3.6.4.-" evidence="1"/>
<dbReference type="EMBL" id="BA000031">
    <property type="protein sequence ID" value="BAC59315.1"/>
    <property type="molecule type" value="Genomic_DNA"/>
</dbReference>
<dbReference type="RefSeq" id="NP_797431.1">
    <property type="nucleotide sequence ID" value="NC_004603.1"/>
</dbReference>
<dbReference type="RefSeq" id="WP_005457270.1">
    <property type="nucleotide sequence ID" value="NC_004603.1"/>
</dbReference>
<dbReference type="SMR" id="Q87QU7"/>
<dbReference type="GeneID" id="1188556"/>
<dbReference type="KEGG" id="vpa:VP1052"/>
<dbReference type="PATRIC" id="fig|223926.6.peg.996"/>
<dbReference type="eggNOG" id="COG2255">
    <property type="taxonomic scope" value="Bacteria"/>
</dbReference>
<dbReference type="HOGENOM" id="CLU_055599_1_0_6"/>
<dbReference type="Proteomes" id="UP000002493">
    <property type="component" value="Chromosome 1"/>
</dbReference>
<dbReference type="GO" id="GO:0005737">
    <property type="term" value="C:cytoplasm"/>
    <property type="evidence" value="ECO:0007669"/>
    <property type="project" value="UniProtKB-SubCell"/>
</dbReference>
<dbReference type="GO" id="GO:0048476">
    <property type="term" value="C:Holliday junction resolvase complex"/>
    <property type="evidence" value="ECO:0007669"/>
    <property type="project" value="UniProtKB-UniRule"/>
</dbReference>
<dbReference type="GO" id="GO:0005524">
    <property type="term" value="F:ATP binding"/>
    <property type="evidence" value="ECO:0007669"/>
    <property type="project" value="UniProtKB-UniRule"/>
</dbReference>
<dbReference type="GO" id="GO:0016887">
    <property type="term" value="F:ATP hydrolysis activity"/>
    <property type="evidence" value="ECO:0007669"/>
    <property type="project" value="InterPro"/>
</dbReference>
<dbReference type="GO" id="GO:0000400">
    <property type="term" value="F:four-way junction DNA binding"/>
    <property type="evidence" value="ECO:0007669"/>
    <property type="project" value="UniProtKB-UniRule"/>
</dbReference>
<dbReference type="GO" id="GO:0009378">
    <property type="term" value="F:four-way junction helicase activity"/>
    <property type="evidence" value="ECO:0007669"/>
    <property type="project" value="InterPro"/>
</dbReference>
<dbReference type="GO" id="GO:0006310">
    <property type="term" value="P:DNA recombination"/>
    <property type="evidence" value="ECO:0007669"/>
    <property type="project" value="UniProtKB-UniRule"/>
</dbReference>
<dbReference type="GO" id="GO:0006281">
    <property type="term" value="P:DNA repair"/>
    <property type="evidence" value="ECO:0007669"/>
    <property type="project" value="UniProtKB-UniRule"/>
</dbReference>
<dbReference type="CDD" id="cd00009">
    <property type="entry name" value="AAA"/>
    <property type="match status" value="1"/>
</dbReference>
<dbReference type="FunFam" id="1.10.10.10:FF:000086">
    <property type="entry name" value="Holliday junction ATP-dependent DNA helicase RuvB"/>
    <property type="match status" value="1"/>
</dbReference>
<dbReference type="FunFam" id="1.10.8.60:FF:000023">
    <property type="entry name" value="Holliday junction ATP-dependent DNA helicase RuvB"/>
    <property type="match status" value="1"/>
</dbReference>
<dbReference type="FunFam" id="3.40.50.300:FF:000073">
    <property type="entry name" value="Holliday junction ATP-dependent DNA helicase RuvB"/>
    <property type="match status" value="1"/>
</dbReference>
<dbReference type="Gene3D" id="1.10.8.60">
    <property type="match status" value="1"/>
</dbReference>
<dbReference type="Gene3D" id="3.40.50.300">
    <property type="entry name" value="P-loop containing nucleotide triphosphate hydrolases"/>
    <property type="match status" value="1"/>
</dbReference>
<dbReference type="Gene3D" id="1.10.10.10">
    <property type="entry name" value="Winged helix-like DNA-binding domain superfamily/Winged helix DNA-binding domain"/>
    <property type="match status" value="1"/>
</dbReference>
<dbReference type="HAMAP" id="MF_00016">
    <property type="entry name" value="DNA_HJ_migration_RuvB"/>
    <property type="match status" value="1"/>
</dbReference>
<dbReference type="InterPro" id="IPR003593">
    <property type="entry name" value="AAA+_ATPase"/>
</dbReference>
<dbReference type="InterPro" id="IPR041445">
    <property type="entry name" value="AAA_lid_4"/>
</dbReference>
<dbReference type="InterPro" id="IPR004605">
    <property type="entry name" value="DNA_helicase_Holl-junc_RuvB"/>
</dbReference>
<dbReference type="InterPro" id="IPR027417">
    <property type="entry name" value="P-loop_NTPase"/>
</dbReference>
<dbReference type="InterPro" id="IPR008824">
    <property type="entry name" value="RuvB-like_N"/>
</dbReference>
<dbReference type="InterPro" id="IPR008823">
    <property type="entry name" value="RuvB_C"/>
</dbReference>
<dbReference type="InterPro" id="IPR036388">
    <property type="entry name" value="WH-like_DNA-bd_sf"/>
</dbReference>
<dbReference type="InterPro" id="IPR036390">
    <property type="entry name" value="WH_DNA-bd_sf"/>
</dbReference>
<dbReference type="NCBIfam" id="NF000868">
    <property type="entry name" value="PRK00080.1"/>
    <property type="match status" value="1"/>
</dbReference>
<dbReference type="NCBIfam" id="TIGR00635">
    <property type="entry name" value="ruvB"/>
    <property type="match status" value="1"/>
</dbReference>
<dbReference type="PANTHER" id="PTHR42848">
    <property type="match status" value="1"/>
</dbReference>
<dbReference type="PANTHER" id="PTHR42848:SF1">
    <property type="entry name" value="HOLLIDAY JUNCTION BRANCH MIGRATION COMPLEX SUBUNIT RUVB"/>
    <property type="match status" value="1"/>
</dbReference>
<dbReference type="Pfam" id="PF17864">
    <property type="entry name" value="AAA_lid_4"/>
    <property type="match status" value="1"/>
</dbReference>
<dbReference type="Pfam" id="PF05491">
    <property type="entry name" value="RuvB_C"/>
    <property type="match status" value="1"/>
</dbReference>
<dbReference type="Pfam" id="PF05496">
    <property type="entry name" value="RuvB_N"/>
    <property type="match status" value="1"/>
</dbReference>
<dbReference type="SMART" id="SM00382">
    <property type="entry name" value="AAA"/>
    <property type="match status" value="1"/>
</dbReference>
<dbReference type="SUPFAM" id="SSF52540">
    <property type="entry name" value="P-loop containing nucleoside triphosphate hydrolases"/>
    <property type="match status" value="1"/>
</dbReference>
<dbReference type="SUPFAM" id="SSF46785">
    <property type="entry name" value="Winged helix' DNA-binding domain"/>
    <property type="match status" value="1"/>
</dbReference>
<protein>
    <recommendedName>
        <fullName evidence="1">Holliday junction branch migration complex subunit RuvB</fullName>
        <ecNumber evidence="1">3.6.4.-</ecNumber>
    </recommendedName>
</protein>
<organism>
    <name type="scientific">Vibrio parahaemolyticus serotype O3:K6 (strain RIMD 2210633)</name>
    <dbReference type="NCBI Taxonomy" id="223926"/>
    <lineage>
        <taxon>Bacteria</taxon>
        <taxon>Pseudomonadati</taxon>
        <taxon>Pseudomonadota</taxon>
        <taxon>Gammaproteobacteria</taxon>
        <taxon>Vibrionales</taxon>
        <taxon>Vibrionaceae</taxon>
        <taxon>Vibrio</taxon>
    </lineage>
</organism>
<evidence type="ECO:0000255" key="1">
    <source>
        <dbReference type="HAMAP-Rule" id="MF_00016"/>
    </source>
</evidence>